<sequence>MTSKVVAAAASAFLSRTNELGNLQKSCIRILSFCESNSSRIGLHIHCPVIKFGLLENLDLCNNLLSLYLKTDGIWNARKLFDEMSHRTVFAWTVMISAFTKSQEFASALSLFEEMMASGTHPNEFTFSSVVRSCAGLRDISYGGRVHGSVIKTGFEGNSVVGSSLSDLYSKCGQFKEACELFSSLQNADTISWTMMISSLVGARKWREALQFYSEMVKAGVPPNEFTFVKLLGASSFLGLEFGKTIHSNIIVRGIPLNVVLKTSLVDFYSQFSKMEDAVRVLNSSGEQDVFLWTSVVSGFVRNLRAKEAVGTFLEMRSLGLQPNNFTYSAILSLCSAVRSLDFGKQIHSQTIKVGFEDSTDVGNALVDMYMKCSASEVEASRVFGAMVSPNVVSWTTLILGLVDHGFVQDCFGLLMEMVKREVEPNVVTLSGVLRACSKLRHVRRVLEIHAYLLRRHVDGEMVVGNSLVDAYASSRKVDYAWNVIRSMKRRDNITYTSLVTRFNELGKHEMALSVINYMYGDGIRMDQLSLPGFISASANLGALETGKHLHCYSVKSGFSGAASVLNSLVDMYSKCGSLEDAKKVFEEIATPDVVSWNGLVSGLASNGFISSALSAFEEMRMKETEPDSVTFLILLSACSNGRLTDLGLEYFQVMKKIYNIEPQVEHYVHLVGILGRAGRLEEATGVVETMHLKPNAMIFKTLLRACRYRGNLSLGEDMANKGLALAPSDPALYILLADLYDESGKPELAQKTRNLMTEKRLSKKLGKSTVEVQGKVHSFVSEDVTRVDKTNGIYAEIESIKEEIKRFGSPYRGNENASFHSAKQAVVYGFIYASPEAPVHVVKNKILCKDCHEFVSILTRLVDKKITVRDGNQVHIFKNGECSCKREETSFV</sequence>
<name>PP430_ARATH</name>
<protein>
    <recommendedName>
        <fullName>Pentatricopeptide repeat-containing protein At5g52850, chloroplastic</fullName>
    </recommendedName>
</protein>
<feature type="transit peptide" description="Chloroplast" evidence="1">
    <location>
        <begin position="1"/>
        <end status="unknown"/>
    </location>
</feature>
<feature type="chain" id="PRO_0000363567" description="Pentatricopeptide repeat-containing protein At5g52850, chloroplastic">
    <location>
        <begin status="unknown"/>
        <end position="893"/>
    </location>
</feature>
<feature type="repeat" description="PPR 1">
    <location>
        <begin position="57"/>
        <end position="87"/>
    </location>
</feature>
<feature type="repeat" description="PPR 2">
    <location>
        <begin position="88"/>
        <end position="122"/>
    </location>
</feature>
<feature type="repeat" description="PPR 3">
    <location>
        <begin position="123"/>
        <end position="157"/>
    </location>
</feature>
<feature type="repeat" description="PPR 4">
    <location>
        <begin position="158"/>
        <end position="188"/>
    </location>
</feature>
<feature type="repeat" description="PPR 5">
    <location>
        <begin position="189"/>
        <end position="223"/>
    </location>
</feature>
<feature type="repeat" description="PPR 6">
    <location>
        <begin position="224"/>
        <end position="257"/>
    </location>
</feature>
<feature type="repeat" description="PPR 7">
    <location>
        <begin position="258"/>
        <end position="288"/>
    </location>
</feature>
<feature type="repeat" description="PPR 8">
    <location>
        <begin position="289"/>
        <end position="323"/>
    </location>
</feature>
<feature type="repeat" description="PPR 9">
    <location>
        <begin position="324"/>
        <end position="358"/>
    </location>
</feature>
<feature type="repeat" description="PPR 10">
    <location>
        <begin position="359"/>
        <end position="390"/>
    </location>
</feature>
<feature type="repeat" description="PPR 11">
    <location>
        <begin position="391"/>
        <end position="425"/>
    </location>
</feature>
<feature type="repeat" description="PPR 12">
    <location>
        <begin position="426"/>
        <end position="460"/>
    </location>
</feature>
<feature type="repeat" description="PPR 13">
    <location>
        <begin position="461"/>
        <end position="491"/>
    </location>
</feature>
<feature type="repeat" description="PPR 14">
    <location>
        <begin position="492"/>
        <end position="526"/>
    </location>
</feature>
<feature type="repeat" description="PPR 15">
    <location>
        <begin position="527"/>
        <end position="561"/>
    </location>
</feature>
<feature type="repeat" description="PPR 16">
    <location>
        <begin position="562"/>
        <end position="592"/>
    </location>
</feature>
<feature type="repeat" description="PPR 17">
    <location>
        <begin position="593"/>
        <end position="627"/>
    </location>
</feature>
<feature type="repeat" description="PPR 18">
    <location>
        <begin position="628"/>
        <end position="658"/>
    </location>
</feature>
<feature type="repeat" description="PPR 19">
    <location>
        <begin position="664"/>
        <end position="694"/>
    </location>
</feature>
<feature type="region of interest" description="Type E motif">
    <location>
        <begin position="699"/>
        <end position="774"/>
    </location>
</feature>
<feature type="region of interest" description="Type E(+) motif">
    <location>
        <begin position="775"/>
        <end position="806"/>
    </location>
</feature>
<feature type="region of interest" description="Type DYW motif">
    <location>
        <begin position="807"/>
        <end position="893"/>
    </location>
</feature>
<evidence type="ECO:0000255" key="1"/>
<evidence type="ECO:0000305" key="2"/>
<proteinExistence type="evidence at transcript level"/>
<reference key="1">
    <citation type="journal article" date="1998" name="DNA Res.">
        <title>Structural analysis of Arabidopsis thaliana chromosome 5. IV. Sequence features of the regions of 1,456,315 bp covered by nineteen physically assigned P1 and TAC clones.</title>
        <authorList>
            <person name="Sato S."/>
            <person name="Kaneko T."/>
            <person name="Kotani H."/>
            <person name="Nakamura Y."/>
            <person name="Asamizu E."/>
            <person name="Miyajima N."/>
            <person name="Tabata S."/>
        </authorList>
    </citation>
    <scope>NUCLEOTIDE SEQUENCE [LARGE SCALE GENOMIC DNA]</scope>
    <source>
        <strain>cv. Columbia</strain>
    </source>
</reference>
<reference key="2">
    <citation type="journal article" date="2017" name="Plant J.">
        <title>Araport11: a complete reannotation of the Arabidopsis thaliana reference genome.</title>
        <authorList>
            <person name="Cheng C.Y."/>
            <person name="Krishnakumar V."/>
            <person name="Chan A.P."/>
            <person name="Thibaud-Nissen F."/>
            <person name="Schobel S."/>
            <person name="Town C.D."/>
        </authorList>
    </citation>
    <scope>GENOME REANNOTATION</scope>
    <source>
        <strain>cv. Columbia</strain>
    </source>
</reference>
<reference key="3">
    <citation type="journal article" date="2000" name="Plant Mol. Biol.">
        <title>In Arabidopsis thaliana, 1% of the genome codes for a novel protein family unique to plants.</title>
        <authorList>
            <person name="Aubourg S."/>
            <person name="Boudet N."/>
            <person name="Kreis M."/>
            <person name="Lecharny A."/>
        </authorList>
    </citation>
    <scope>GENE FAMILY</scope>
</reference>
<reference key="4">
    <citation type="journal article" date="2004" name="Plant Cell">
        <title>Genome-wide analysis of Arabidopsis pentatricopeptide repeat proteins reveals their essential role in organelle biogenesis.</title>
        <authorList>
            <person name="Lurin C."/>
            <person name="Andres C."/>
            <person name="Aubourg S."/>
            <person name="Bellaoui M."/>
            <person name="Bitton F."/>
            <person name="Bruyere C."/>
            <person name="Caboche M."/>
            <person name="Debast C."/>
            <person name="Gualberto J."/>
            <person name="Hoffmann B."/>
            <person name="Lecharny A."/>
            <person name="Le Ret M."/>
            <person name="Martin-Magniette M.-L."/>
            <person name="Mireau H."/>
            <person name="Peeters N."/>
            <person name="Renou J.-P."/>
            <person name="Szurek B."/>
            <person name="Taconnat L."/>
            <person name="Small I."/>
        </authorList>
    </citation>
    <scope>GENE FAMILY</scope>
</reference>
<keyword id="KW-0150">Chloroplast</keyword>
<keyword id="KW-0934">Plastid</keyword>
<keyword id="KW-1185">Reference proteome</keyword>
<keyword id="KW-0677">Repeat</keyword>
<keyword id="KW-0809">Transit peptide</keyword>
<comment type="subcellular location">
    <subcellularLocation>
        <location evidence="2">Plastid</location>
        <location evidence="2">Chloroplast</location>
    </subcellularLocation>
</comment>
<comment type="similarity">
    <text evidence="2">Belongs to the PPR family. PCMP-H subfamily.</text>
</comment>
<comment type="online information" name="Pentatricopeptide repeat proteins">
    <link uri="https://ppr.plantenergy.uwa.edu.au"/>
</comment>
<dbReference type="EMBL" id="AB009055">
    <property type="protein sequence ID" value="BAB10433.1"/>
    <property type="molecule type" value="Genomic_DNA"/>
</dbReference>
<dbReference type="EMBL" id="CP002688">
    <property type="protein sequence ID" value="AED96268.1"/>
    <property type="molecule type" value="Genomic_DNA"/>
</dbReference>
<dbReference type="RefSeq" id="NP_200097.1">
    <property type="nucleotide sequence ID" value="NM_124663.1"/>
</dbReference>
<dbReference type="SMR" id="Q9FLX6"/>
<dbReference type="FunCoup" id="Q9FLX6">
    <property type="interactions" value="119"/>
</dbReference>
<dbReference type="STRING" id="3702.Q9FLX6"/>
<dbReference type="PaxDb" id="3702-AT5G52850.1"/>
<dbReference type="ProteomicsDB" id="249311"/>
<dbReference type="EnsemblPlants" id="AT5G52850.1">
    <property type="protein sequence ID" value="AT5G52850.1"/>
    <property type="gene ID" value="AT5G52850"/>
</dbReference>
<dbReference type="GeneID" id="835362"/>
<dbReference type="Gramene" id="AT5G52850.1">
    <property type="protein sequence ID" value="AT5G52850.1"/>
    <property type="gene ID" value="AT5G52850"/>
</dbReference>
<dbReference type="KEGG" id="ath:AT5G52850"/>
<dbReference type="Araport" id="AT5G52850"/>
<dbReference type="TAIR" id="AT5G52850"/>
<dbReference type="eggNOG" id="KOG4197">
    <property type="taxonomic scope" value="Eukaryota"/>
</dbReference>
<dbReference type="HOGENOM" id="CLU_002706_15_1_1"/>
<dbReference type="InParanoid" id="Q9FLX6"/>
<dbReference type="OMA" id="RMFHEDV"/>
<dbReference type="PhylomeDB" id="Q9FLX6"/>
<dbReference type="PRO" id="PR:Q9FLX6"/>
<dbReference type="Proteomes" id="UP000006548">
    <property type="component" value="Chromosome 5"/>
</dbReference>
<dbReference type="ExpressionAtlas" id="Q9FLX6">
    <property type="expression patterns" value="baseline and differential"/>
</dbReference>
<dbReference type="GO" id="GO:0009507">
    <property type="term" value="C:chloroplast"/>
    <property type="evidence" value="ECO:0007669"/>
    <property type="project" value="UniProtKB-SubCell"/>
</dbReference>
<dbReference type="GO" id="GO:0003723">
    <property type="term" value="F:RNA binding"/>
    <property type="evidence" value="ECO:0007669"/>
    <property type="project" value="InterPro"/>
</dbReference>
<dbReference type="GO" id="GO:0008270">
    <property type="term" value="F:zinc ion binding"/>
    <property type="evidence" value="ECO:0007669"/>
    <property type="project" value="InterPro"/>
</dbReference>
<dbReference type="GO" id="GO:0009451">
    <property type="term" value="P:RNA modification"/>
    <property type="evidence" value="ECO:0007669"/>
    <property type="project" value="InterPro"/>
</dbReference>
<dbReference type="FunFam" id="1.25.40.10:FF:001232">
    <property type="entry name" value="Pentatricopeptide repeat-containing protein At5g52850, chloroplastic"/>
    <property type="match status" value="1"/>
</dbReference>
<dbReference type="FunFam" id="1.25.40.10:FF:003465">
    <property type="entry name" value="Pentatricopeptide repeat-containing protein At5g52850, chloroplastic"/>
    <property type="match status" value="1"/>
</dbReference>
<dbReference type="FunFam" id="1.25.40.10:FF:001224">
    <property type="entry name" value="Pentatricopeptide repeat-containing protein chloroplastic"/>
    <property type="match status" value="1"/>
</dbReference>
<dbReference type="FunFam" id="1.25.40.10:FF:000090">
    <property type="entry name" value="Pentatricopeptide repeat-containing protein, chloroplastic"/>
    <property type="match status" value="1"/>
</dbReference>
<dbReference type="FunFam" id="1.25.40.10:FF:000285">
    <property type="entry name" value="Pentatricopeptide repeat-containing protein, chloroplastic"/>
    <property type="match status" value="2"/>
</dbReference>
<dbReference type="Gene3D" id="1.25.40.10">
    <property type="entry name" value="Tetratricopeptide repeat domain"/>
    <property type="match status" value="6"/>
</dbReference>
<dbReference type="InterPro" id="IPR032867">
    <property type="entry name" value="DYW_dom"/>
</dbReference>
<dbReference type="InterPro" id="IPR002885">
    <property type="entry name" value="Pentatricopeptide_rpt"/>
</dbReference>
<dbReference type="InterPro" id="IPR046960">
    <property type="entry name" value="PPR_At4g14850-like_plant"/>
</dbReference>
<dbReference type="InterPro" id="IPR011990">
    <property type="entry name" value="TPR-like_helical_dom_sf"/>
</dbReference>
<dbReference type="NCBIfam" id="TIGR00756">
    <property type="entry name" value="PPR"/>
    <property type="match status" value="5"/>
</dbReference>
<dbReference type="PANTHER" id="PTHR47926">
    <property type="entry name" value="PENTATRICOPEPTIDE REPEAT-CONTAINING PROTEIN"/>
    <property type="match status" value="1"/>
</dbReference>
<dbReference type="PANTHER" id="PTHR47926:SF427">
    <property type="entry name" value="TETRATRICOPEPTIDE-LIKE HELICAL DOMAIN SUPERFAMILY"/>
    <property type="match status" value="1"/>
</dbReference>
<dbReference type="Pfam" id="PF14432">
    <property type="entry name" value="DYW_deaminase"/>
    <property type="match status" value="1"/>
</dbReference>
<dbReference type="Pfam" id="PF01535">
    <property type="entry name" value="PPR"/>
    <property type="match status" value="4"/>
</dbReference>
<dbReference type="Pfam" id="PF13041">
    <property type="entry name" value="PPR_2"/>
    <property type="match status" value="5"/>
</dbReference>
<dbReference type="PROSITE" id="PS51375">
    <property type="entry name" value="PPR"/>
    <property type="match status" value="18"/>
</dbReference>
<organism>
    <name type="scientific">Arabidopsis thaliana</name>
    <name type="common">Mouse-ear cress</name>
    <dbReference type="NCBI Taxonomy" id="3702"/>
    <lineage>
        <taxon>Eukaryota</taxon>
        <taxon>Viridiplantae</taxon>
        <taxon>Streptophyta</taxon>
        <taxon>Embryophyta</taxon>
        <taxon>Tracheophyta</taxon>
        <taxon>Spermatophyta</taxon>
        <taxon>Magnoliopsida</taxon>
        <taxon>eudicotyledons</taxon>
        <taxon>Gunneridae</taxon>
        <taxon>Pentapetalae</taxon>
        <taxon>rosids</taxon>
        <taxon>malvids</taxon>
        <taxon>Brassicales</taxon>
        <taxon>Brassicaceae</taxon>
        <taxon>Camelineae</taxon>
        <taxon>Arabidopsis</taxon>
    </lineage>
</organism>
<gene>
    <name type="primary">PCMP-H31</name>
    <name type="ordered locus">At5g52850</name>
    <name type="ORF">MXC20.7</name>
</gene>
<accession>Q9FLX6</accession>